<reference key="1">
    <citation type="journal article" date="2002" name="J. Biol. Chem.">
        <title>Human testis/sperm-specific histone H2B (hTSH2B). Molecular cloning and characterization.</title>
        <authorList>
            <person name="Zalensky A.O."/>
            <person name="Siino J.S."/>
            <person name="Gineitis A.A."/>
            <person name="Zalenskaya I.A."/>
            <person name="Tomilin N.V."/>
            <person name="Yau P."/>
            <person name="Bradbury E.M."/>
        </authorList>
    </citation>
    <scope>NUCLEOTIDE SEQUENCE [GENOMIC DNA]</scope>
    <scope>TISSUE SPECIFICITY</scope>
</reference>
<reference key="2">
    <citation type="journal article" date="2002" name="Genomics">
        <title>The human and mouse replication-dependent histone genes.</title>
        <authorList>
            <person name="Marzluff W.F."/>
            <person name="Gongidi P."/>
            <person name="Woods K.R."/>
            <person name="Jin J."/>
            <person name="Maltais L.J."/>
        </authorList>
    </citation>
    <scope>NUCLEOTIDE SEQUENCE [GENOMIC DNA]</scope>
</reference>
<reference key="3">
    <citation type="journal article" date="2004" name="Nat. Genet.">
        <title>Complete sequencing and characterization of 21,243 full-length human cDNAs.</title>
        <authorList>
            <person name="Ota T."/>
            <person name="Suzuki Y."/>
            <person name="Nishikawa T."/>
            <person name="Otsuki T."/>
            <person name="Sugiyama T."/>
            <person name="Irie R."/>
            <person name="Wakamatsu A."/>
            <person name="Hayashi K."/>
            <person name="Sato H."/>
            <person name="Nagai K."/>
            <person name="Kimura K."/>
            <person name="Makita H."/>
            <person name="Sekine M."/>
            <person name="Obayashi M."/>
            <person name="Nishi T."/>
            <person name="Shibahara T."/>
            <person name="Tanaka T."/>
            <person name="Ishii S."/>
            <person name="Yamamoto J."/>
            <person name="Saito K."/>
            <person name="Kawai Y."/>
            <person name="Isono Y."/>
            <person name="Nakamura Y."/>
            <person name="Nagahari K."/>
            <person name="Murakami K."/>
            <person name="Yasuda T."/>
            <person name="Iwayanagi T."/>
            <person name="Wagatsuma M."/>
            <person name="Shiratori A."/>
            <person name="Sudo H."/>
            <person name="Hosoiri T."/>
            <person name="Kaku Y."/>
            <person name="Kodaira H."/>
            <person name="Kondo H."/>
            <person name="Sugawara M."/>
            <person name="Takahashi M."/>
            <person name="Kanda K."/>
            <person name="Yokoi T."/>
            <person name="Furuya T."/>
            <person name="Kikkawa E."/>
            <person name="Omura Y."/>
            <person name="Abe K."/>
            <person name="Kamihara K."/>
            <person name="Katsuta N."/>
            <person name="Sato K."/>
            <person name="Tanikawa M."/>
            <person name="Yamazaki M."/>
            <person name="Ninomiya K."/>
            <person name="Ishibashi T."/>
            <person name="Yamashita H."/>
            <person name="Murakawa K."/>
            <person name="Fujimori K."/>
            <person name="Tanai H."/>
            <person name="Kimata M."/>
            <person name="Watanabe M."/>
            <person name="Hiraoka S."/>
            <person name="Chiba Y."/>
            <person name="Ishida S."/>
            <person name="Ono Y."/>
            <person name="Takiguchi S."/>
            <person name="Watanabe S."/>
            <person name="Yosida M."/>
            <person name="Hotuta T."/>
            <person name="Kusano J."/>
            <person name="Kanehori K."/>
            <person name="Takahashi-Fujii A."/>
            <person name="Hara H."/>
            <person name="Tanase T.-O."/>
            <person name="Nomura Y."/>
            <person name="Togiya S."/>
            <person name="Komai F."/>
            <person name="Hara R."/>
            <person name="Takeuchi K."/>
            <person name="Arita M."/>
            <person name="Imose N."/>
            <person name="Musashino K."/>
            <person name="Yuuki H."/>
            <person name="Oshima A."/>
            <person name="Sasaki N."/>
            <person name="Aotsuka S."/>
            <person name="Yoshikawa Y."/>
            <person name="Matsunawa H."/>
            <person name="Ichihara T."/>
            <person name="Shiohata N."/>
            <person name="Sano S."/>
            <person name="Moriya S."/>
            <person name="Momiyama H."/>
            <person name="Satoh N."/>
            <person name="Takami S."/>
            <person name="Terashima Y."/>
            <person name="Suzuki O."/>
            <person name="Nakagawa S."/>
            <person name="Senoh A."/>
            <person name="Mizoguchi H."/>
            <person name="Goto Y."/>
            <person name="Shimizu F."/>
            <person name="Wakebe H."/>
            <person name="Hishigaki H."/>
            <person name="Watanabe T."/>
            <person name="Sugiyama A."/>
            <person name="Takemoto M."/>
            <person name="Kawakami B."/>
            <person name="Yamazaki M."/>
            <person name="Watanabe K."/>
            <person name="Kumagai A."/>
            <person name="Itakura S."/>
            <person name="Fukuzumi Y."/>
            <person name="Fujimori Y."/>
            <person name="Komiyama M."/>
            <person name="Tashiro H."/>
            <person name="Tanigami A."/>
            <person name="Fujiwara T."/>
            <person name="Ono T."/>
            <person name="Yamada K."/>
            <person name="Fujii Y."/>
            <person name="Ozaki K."/>
            <person name="Hirao M."/>
            <person name="Ohmori Y."/>
            <person name="Kawabata A."/>
            <person name="Hikiji T."/>
            <person name="Kobatake N."/>
            <person name="Inagaki H."/>
            <person name="Ikema Y."/>
            <person name="Okamoto S."/>
            <person name="Okitani R."/>
            <person name="Kawakami T."/>
            <person name="Noguchi S."/>
            <person name="Itoh T."/>
            <person name="Shigeta K."/>
            <person name="Senba T."/>
            <person name="Matsumura K."/>
            <person name="Nakajima Y."/>
            <person name="Mizuno T."/>
            <person name="Morinaga M."/>
            <person name="Sasaki M."/>
            <person name="Togashi T."/>
            <person name="Oyama M."/>
            <person name="Hata H."/>
            <person name="Watanabe M."/>
            <person name="Komatsu T."/>
            <person name="Mizushima-Sugano J."/>
            <person name="Satoh T."/>
            <person name="Shirai Y."/>
            <person name="Takahashi Y."/>
            <person name="Nakagawa K."/>
            <person name="Okumura K."/>
            <person name="Nagase T."/>
            <person name="Nomura N."/>
            <person name="Kikuchi H."/>
            <person name="Masuho Y."/>
            <person name="Yamashita R."/>
            <person name="Nakai K."/>
            <person name="Yada T."/>
            <person name="Nakamura Y."/>
            <person name="Ohara O."/>
            <person name="Isogai T."/>
            <person name="Sugano S."/>
        </authorList>
    </citation>
    <scope>NUCLEOTIDE SEQUENCE [LARGE SCALE MRNA]</scope>
    <source>
        <tissue>Testis</tissue>
    </source>
</reference>
<reference key="4">
    <citation type="journal article" date="2003" name="Nature">
        <title>The DNA sequence and analysis of human chromosome 6.</title>
        <authorList>
            <person name="Mungall A.J."/>
            <person name="Palmer S.A."/>
            <person name="Sims S.K."/>
            <person name="Edwards C.A."/>
            <person name="Ashurst J.L."/>
            <person name="Wilming L."/>
            <person name="Jones M.C."/>
            <person name="Horton R."/>
            <person name="Hunt S.E."/>
            <person name="Scott C.E."/>
            <person name="Gilbert J.G.R."/>
            <person name="Clamp M.E."/>
            <person name="Bethel G."/>
            <person name="Milne S."/>
            <person name="Ainscough R."/>
            <person name="Almeida J.P."/>
            <person name="Ambrose K.D."/>
            <person name="Andrews T.D."/>
            <person name="Ashwell R.I.S."/>
            <person name="Babbage A.K."/>
            <person name="Bagguley C.L."/>
            <person name="Bailey J."/>
            <person name="Banerjee R."/>
            <person name="Barker D.J."/>
            <person name="Barlow K.F."/>
            <person name="Bates K."/>
            <person name="Beare D.M."/>
            <person name="Beasley H."/>
            <person name="Beasley O."/>
            <person name="Bird C.P."/>
            <person name="Blakey S.E."/>
            <person name="Bray-Allen S."/>
            <person name="Brook J."/>
            <person name="Brown A.J."/>
            <person name="Brown J.Y."/>
            <person name="Burford D.C."/>
            <person name="Burrill W."/>
            <person name="Burton J."/>
            <person name="Carder C."/>
            <person name="Carter N.P."/>
            <person name="Chapman J.C."/>
            <person name="Clark S.Y."/>
            <person name="Clark G."/>
            <person name="Clee C.M."/>
            <person name="Clegg S."/>
            <person name="Cobley V."/>
            <person name="Collier R.E."/>
            <person name="Collins J.E."/>
            <person name="Colman L.K."/>
            <person name="Corby N.R."/>
            <person name="Coville G.J."/>
            <person name="Culley K.M."/>
            <person name="Dhami P."/>
            <person name="Davies J."/>
            <person name="Dunn M."/>
            <person name="Earthrowl M.E."/>
            <person name="Ellington A.E."/>
            <person name="Evans K.A."/>
            <person name="Faulkner L."/>
            <person name="Francis M.D."/>
            <person name="Frankish A."/>
            <person name="Frankland J."/>
            <person name="French L."/>
            <person name="Garner P."/>
            <person name="Garnett J."/>
            <person name="Ghori M.J."/>
            <person name="Gilby L.M."/>
            <person name="Gillson C.J."/>
            <person name="Glithero R.J."/>
            <person name="Grafham D.V."/>
            <person name="Grant M."/>
            <person name="Gribble S."/>
            <person name="Griffiths C."/>
            <person name="Griffiths M.N.D."/>
            <person name="Hall R."/>
            <person name="Halls K.S."/>
            <person name="Hammond S."/>
            <person name="Harley J.L."/>
            <person name="Hart E.A."/>
            <person name="Heath P.D."/>
            <person name="Heathcott R."/>
            <person name="Holmes S.J."/>
            <person name="Howden P.J."/>
            <person name="Howe K.L."/>
            <person name="Howell G.R."/>
            <person name="Huckle E."/>
            <person name="Humphray S.J."/>
            <person name="Humphries M.D."/>
            <person name="Hunt A.R."/>
            <person name="Johnson C.M."/>
            <person name="Joy A.A."/>
            <person name="Kay M."/>
            <person name="Keenan S.J."/>
            <person name="Kimberley A.M."/>
            <person name="King A."/>
            <person name="Laird G.K."/>
            <person name="Langford C."/>
            <person name="Lawlor S."/>
            <person name="Leongamornlert D.A."/>
            <person name="Leversha M."/>
            <person name="Lloyd C.R."/>
            <person name="Lloyd D.M."/>
            <person name="Loveland J.E."/>
            <person name="Lovell J."/>
            <person name="Martin S."/>
            <person name="Mashreghi-Mohammadi M."/>
            <person name="Maslen G.L."/>
            <person name="Matthews L."/>
            <person name="McCann O.T."/>
            <person name="McLaren S.J."/>
            <person name="McLay K."/>
            <person name="McMurray A."/>
            <person name="Moore M.J.F."/>
            <person name="Mullikin J.C."/>
            <person name="Niblett D."/>
            <person name="Nickerson T."/>
            <person name="Novik K.L."/>
            <person name="Oliver K."/>
            <person name="Overton-Larty E.K."/>
            <person name="Parker A."/>
            <person name="Patel R."/>
            <person name="Pearce A.V."/>
            <person name="Peck A.I."/>
            <person name="Phillimore B.J.C.T."/>
            <person name="Phillips S."/>
            <person name="Plumb R.W."/>
            <person name="Porter K.M."/>
            <person name="Ramsey Y."/>
            <person name="Ranby S.A."/>
            <person name="Rice C.M."/>
            <person name="Ross M.T."/>
            <person name="Searle S.M."/>
            <person name="Sehra H.K."/>
            <person name="Sheridan E."/>
            <person name="Skuce C.D."/>
            <person name="Smith S."/>
            <person name="Smith M."/>
            <person name="Spraggon L."/>
            <person name="Squares S.L."/>
            <person name="Steward C.A."/>
            <person name="Sycamore N."/>
            <person name="Tamlyn-Hall G."/>
            <person name="Tester J."/>
            <person name="Theaker A.J."/>
            <person name="Thomas D.W."/>
            <person name="Thorpe A."/>
            <person name="Tracey A."/>
            <person name="Tromans A."/>
            <person name="Tubby B."/>
            <person name="Wall M."/>
            <person name="Wallis J.M."/>
            <person name="West A.P."/>
            <person name="White S.S."/>
            <person name="Whitehead S.L."/>
            <person name="Whittaker H."/>
            <person name="Wild A."/>
            <person name="Willey D.J."/>
            <person name="Wilmer T.E."/>
            <person name="Wood J.M."/>
            <person name="Wray P.W."/>
            <person name="Wyatt J.C."/>
            <person name="Young L."/>
            <person name="Younger R.M."/>
            <person name="Bentley D.R."/>
            <person name="Coulson A."/>
            <person name="Durbin R.M."/>
            <person name="Hubbard T."/>
            <person name="Sulston J.E."/>
            <person name="Dunham I."/>
            <person name="Rogers J."/>
            <person name="Beck S."/>
        </authorList>
    </citation>
    <scope>NUCLEOTIDE SEQUENCE [LARGE SCALE GENOMIC DNA]</scope>
</reference>
<reference key="5">
    <citation type="submission" date="2005-07" db="EMBL/GenBank/DDBJ databases">
        <authorList>
            <person name="Mural R.J."/>
            <person name="Istrail S."/>
            <person name="Sutton G.G."/>
            <person name="Florea L."/>
            <person name="Halpern A.L."/>
            <person name="Mobarry C.M."/>
            <person name="Lippert R."/>
            <person name="Walenz B."/>
            <person name="Shatkay H."/>
            <person name="Dew I."/>
            <person name="Miller J.R."/>
            <person name="Flanigan M.J."/>
            <person name="Edwards N.J."/>
            <person name="Bolanos R."/>
            <person name="Fasulo D."/>
            <person name="Halldorsson B.V."/>
            <person name="Hannenhalli S."/>
            <person name="Turner R."/>
            <person name="Yooseph S."/>
            <person name="Lu F."/>
            <person name="Nusskern D.R."/>
            <person name="Shue B.C."/>
            <person name="Zheng X.H."/>
            <person name="Zhong F."/>
            <person name="Delcher A.L."/>
            <person name="Huson D.H."/>
            <person name="Kravitz S.A."/>
            <person name="Mouchard L."/>
            <person name="Reinert K."/>
            <person name="Remington K.A."/>
            <person name="Clark A.G."/>
            <person name="Waterman M.S."/>
            <person name="Eichler E.E."/>
            <person name="Adams M.D."/>
            <person name="Hunkapiller M.W."/>
            <person name="Myers E.W."/>
            <person name="Venter J.C."/>
        </authorList>
    </citation>
    <scope>NUCLEOTIDE SEQUENCE [LARGE SCALE GENOMIC DNA]</scope>
</reference>
<reference key="6">
    <citation type="journal article" date="2004" name="Genome Res.">
        <title>The status, quality, and expansion of the NIH full-length cDNA project: the Mammalian Gene Collection (MGC).</title>
        <authorList>
            <consortium name="The MGC Project Team"/>
        </authorList>
    </citation>
    <scope>NUCLEOTIDE SEQUENCE [LARGE SCALE MRNA]</scope>
</reference>
<reference key="7">
    <citation type="journal article" date="2005" name="Mol. Cell">
        <title>Monoubiquitination of human histone H2B: the factors involved and their roles in HOX gene regulation.</title>
        <authorList>
            <person name="Zhu B."/>
            <person name="Zheng Y."/>
            <person name="Pham A.-D."/>
            <person name="Mandal S.S."/>
            <person name="Erdjument-Bromage H."/>
            <person name="Tempst P."/>
            <person name="Reinberg D."/>
        </authorList>
    </citation>
    <scope>UBIQUITINATION AT LYS-122</scope>
</reference>
<reference key="8">
    <citation type="journal article" date="2005" name="Mol. Cell. Biochem.">
        <title>Inhibition of core histones acetylation by carcinogenic nickel(II).</title>
        <authorList>
            <person name="Golebiowski F."/>
            <person name="Kasprzak K.S."/>
        </authorList>
    </citation>
    <scope>ACETYLATION AT LYS-7; LYS-14; LYS-17 AND LYS-22</scope>
</reference>
<reference key="9">
    <citation type="journal article" date="2006" name="Cell">
        <title>Histone H2B monoubiquitination functions cooperatively with FACT to regulate elongation by RNA polymerase II.</title>
        <authorList>
            <person name="Pavri R."/>
            <person name="Zhu B."/>
            <person name="Li G."/>
            <person name="Trojer P."/>
            <person name="Mandal S."/>
            <person name="Shilatifard A."/>
            <person name="Reinberg D."/>
        </authorList>
    </citation>
    <scope>UBIQUITINATION AT LYS-122</scope>
</reference>
<reference key="10">
    <citation type="journal article" date="2011" name="Cell">
        <title>Identification of 67 histone marks and histone lysine crotonylation as a new type of histone modification.</title>
        <authorList>
            <person name="Tan M."/>
            <person name="Luo H."/>
            <person name="Lee S."/>
            <person name="Jin F."/>
            <person name="Yang J.S."/>
            <person name="Montellier E."/>
            <person name="Buchou T."/>
            <person name="Cheng Z."/>
            <person name="Rousseaux S."/>
            <person name="Rajagopal N."/>
            <person name="Lu Z."/>
            <person name="Ye Z."/>
            <person name="Zhu Q."/>
            <person name="Wysocka J."/>
            <person name="Ye Y."/>
            <person name="Khochbin S."/>
            <person name="Ren B."/>
            <person name="Zhao Y."/>
        </authorList>
    </citation>
    <scope>CROTONYLATION AT LYS-7; LYS-13; LYS-14; LYS-17; LYS-18; LYS-22; LYS-25 AND LYS-36</scope>
</reference>
<reference key="11">
    <citation type="journal article" date="2011" name="Mol. Cell">
        <title>The RING finger protein MSL2 in the MOF complex is an E3 ubiquitin ligase for H2B K34 and is involved in crosstalk with H3 K4 and K79 methylation.</title>
        <authorList>
            <person name="Wu L."/>
            <person name="Zee B.M."/>
            <person name="Wang Y."/>
            <person name="Garcia B.A."/>
            <person name="Dou Y."/>
        </authorList>
    </citation>
    <scope>UBIQUITINATION AT LYS-36</scope>
</reference>
<reference key="12">
    <citation type="journal article" date="2011" name="PLoS ONE">
        <title>Histone variants and their post-translational modifications in primary human fat cells.</title>
        <authorList>
            <person name="Jufvas A."/>
            <person name="Stralfors P."/>
            <person name="Vener A.V."/>
        </authorList>
    </citation>
    <scope>ACETYLATION AT LYS-87</scope>
    <scope>METHYLATION AT ARG-81; LYS-87; ARG-88 AND ARG-94</scope>
    <scope>PHOSPHORYLATION AT SER-86</scope>
    <scope>FUNCTION</scope>
    <scope>TISSUE SPECIFICITY</scope>
</reference>
<reference key="13">
    <citation type="journal article" date="2019" name="Nature">
        <title>Metabolic regulation of gene expression by histone lactylation.</title>
        <authorList>
            <person name="Zhang D."/>
            <person name="Tang Z."/>
            <person name="Huang H."/>
            <person name="Zhou G."/>
            <person name="Cui C."/>
            <person name="Weng Y."/>
            <person name="Liu W."/>
            <person name="Kim S."/>
            <person name="Lee S."/>
            <person name="Perez-Neut M."/>
            <person name="Ding J."/>
            <person name="Czyz D."/>
            <person name="Hu R."/>
            <person name="Ye Z."/>
            <person name="He M."/>
            <person name="Zheng Y.G."/>
            <person name="Shuman H.A."/>
            <person name="Dai L."/>
            <person name="Ren B."/>
            <person name="Roeder R.G."/>
            <person name="Becker L."/>
            <person name="Zhao Y."/>
        </authorList>
    </citation>
    <scope>LACTYLATION AT LYS-6; LYS-12; LYS-16; LYS-17; LYS-21; LYS-24; LYS-44; LYS-86; LYS-109; LYS-117 AND LYS-121</scope>
</reference>
<protein>
    <recommendedName>
        <fullName>Histone H2B type 1-A</fullName>
    </recommendedName>
    <alternativeName>
        <fullName evidence="17">Histone H2B, testis</fullName>
        <shortName>TSH2B.1</shortName>
        <shortName evidence="17">hTSH2B</shortName>
    </alternativeName>
    <alternativeName>
        <fullName evidence="17">Testis-specific histone H2B</fullName>
    </alternativeName>
</protein>
<keyword id="KW-0002">3D-structure</keyword>
<keyword id="KW-0007">Acetylation</keyword>
<keyword id="KW-0158">Chromosome</keyword>
<keyword id="KW-0238">DNA-binding</keyword>
<keyword id="KW-1017">Isopeptide bond</keyword>
<keyword id="KW-0488">Methylation</keyword>
<keyword id="KW-0544">Nucleosome core</keyword>
<keyword id="KW-0539">Nucleus</keyword>
<keyword id="KW-0597">Phosphoprotein</keyword>
<keyword id="KW-1267">Proteomics identification</keyword>
<keyword id="KW-1185">Reference proteome</keyword>
<keyword id="KW-0832">Ubl conjugation</keyword>
<gene>
    <name evidence="19" type="primary">H2BC1</name>
    <name evidence="19" type="synonym">HIST1H2BA</name>
    <name evidence="17" type="synonym">TSH2B</name>
</gene>
<name>H2B1A_HUMAN</name>
<accession>Q96A08</accession>
<accession>B2R544</accession>
<accession>Q6NZ98</accession>
<accession>Q6NZA0</accession>
<accession>Q6NZA1</accession>
<feature type="initiator methionine" description="Removed" evidence="1">
    <location>
        <position position="1"/>
    </location>
</feature>
<feature type="chain" id="PRO_0000071842" description="Histone H2B type 1-A">
    <location>
        <begin position="2"/>
        <end position="127"/>
    </location>
</feature>
<feature type="region of interest" description="Disordered" evidence="9">
    <location>
        <begin position="1"/>
        <end position="36"/>
    </location>
</feature>
<feature type="modified residue" description="N-acetylproline" evidence="1">
    <location>
        <position position="2"/>
    </location>
</feature>
<feature type="modified residue" description="N6-acetyllysine; alternate" evidence="11">
    <location>
        <position position="7"/>
    </location>
</feature>
<feature type="modified residue" description="N6-crotonyllysine; alternate" evidence="15">
    <location>
        <position position="7"/>
    </location>
</feature>
<feature type="modified residue" description="N6-lactoyllysine; alternate" evidence="16">
    <location>
        <position position="7"/>
    </location>
</feature>
<feature type="modified residue" description="N6-acetyllysine; alternate" evidence="4">
    <location>
        <position position="13"/>
    </location>
</feature>
<feature type="modified residue" description="N6-crotonyllysine; alternate" evidence="15">
    <location>
        <position position="13"/>
    </location>
</feature>
<feature type="modified residue" description="N6-lactoyllysine; alternate" evidence="16">
    <location>
        <position position="13"/>
    </location>
</feature>
<feature type="modified residue" description="N6-acetyllysine; alternate" evidence="11">
    <location>
        <position position="14"/>
    </location>
</feature>
<feature type="modified residue" description="N6-crotonyllysine; alternate" evidence="15">
    <location>
        <position position="14"/>
    </location>
</feature>
<feature type="modified residue" description="N6-acetyllysine; alternate" evidence="11">
    <location>
        <position position="17"/>
    </location>
</feature>
<feature type="modified residue" description="N6-crotonyllysine; alternate" evidence="15">
    <location>
        <position position="17"/>
    </location>
</feature>
<feature type="modified residue" description="N6-lactoyllysine; alternate" evidence="16">
    <location>
        <position position="17"/>
    </location>
</feature>
<feature type="modified residue" description="N6-acetyllysine; alternate" evidence="6">
    <location>
        <position position="18"/>
    </location>
</feature>
<feature type="modified residue" description="N6-crotonyllysine; alternate" evidence="15">
    <location>
        <position position="18"/>
    </location>
</feature>
<feature type="modified residue" description="N6-lactoyllysine; alternate" evidence="16">
    <location>
        <position position="18"/>
    </location>
</feature>
<feature type="modified residue" description="N6-acetyllysine; alternate" evidence="11">
    <location>
        <position position="22"/>
    </location>
</feature>
<feature type="modified residue" description="N6-crotonyllysine; alternate" evidence="15">
    <location>
        <position position="22"/>
    </location>
</feature>
<feature type="modified residue" description="N6-lactoyllysine; alternate" evidence="16">
    <location>
        <position position="22"/>
    </location>
</feature>
<feature type="modified residue" description="N6-acetyllysine; alternate" evidence="2">
    <location>
        <position position="25"/>
    </location>
</feature>
<feature type="modified residue" description="N6-crotonyllysine; alternate" evidence="15">
    <location>
        <position position="25"/>
    </location>
</feature>
<feature type="modified residue" description="N6-lactoyllysine; alternate" evidence="16">
    <location>
        <position position="25"/>
    </location>
</feature>
<feature type="modified residue" description="N6-crotonyllysine; alternate" evidence="15">
    <location>
        <position position="36"/>
    </location>
</feature>
<feature type="modified residue" description="N6-succinyllysine; alternate" evidence="2">
    <location>
        <position position="36"/>
    </location>
</feature>
<feature type="modified residue" description="Phosphoserine" evidence="8">
    <location>
        <position position="38"/>
    </location>
</feature>
<feature type="modified residue" description="N6-lactoyllysine; alternate" evidence="16">
    <location>
        <position position="45"/>
    </location>
</feature>
<feature type="modified residue" description="N6-methyllysine" evidence="4">
    <location>
        <position position="48"/>
    </location>
</feature>
<feature type="modified residue" description="N6,N6-dimethyllysine" evidence="4">
    <location>
        <position position="59"/>
    </location>
</feature>
<feature type="modified residue" description="Dimethylated arginine" evidence="14">
    <location>
        <position position="81"/>
    </location>
</feature>
<feature type="modified residue" description="Phosphoserine" evidence="14">
    <location>
        <position position="86"/>
    </location>
</feature>
<feature type="modified residue" description="N6,N6,N6-trimethyllysine; alternate" evidence="14">
    <location>
        <position position="87"/>
    </location>
</feature>
<feature type="modified residue" description="N6-acetyllysine; alternate" evidence="14">
    <location>
        <position position="87"/>
    </location>
</feature>
<feature type="modified residue" description="N6-lactoyllysine; alternate" evidence="16">
    <location>
        <position position="87"/>
    </location>
</feature>
<feature type="modified residue" description="Omega-N-methylarginine" evidence="14">
    <location>
        <position position="88"/>
    </location>
</feature>
<feature type="modified residue" description="Omega-N-methylarginine" evidence="14">
    <location>
        <position position="94"/>
    </location>
</feature>
<feature type="modified residue" description="N6-lactoyllysine; alternate" evidence="16">
    <location>
        <position position="110"/>
    </location>
</feature>
<feature type="modified residue" description="N6-methyllysine" evidence="4">
    <location>
        <position position="110"/>
    </location>
</feature>
<feature type="modified residue" description="Phosphothreonine" evidence="6">
    <location>
        <position position="117"/>
    </location>
</feature>
<feature type="modified residue" description="N6-lactoyllysine; alternate" evidence="16">
    <location>
        <position position="118"/>
    </location>
</feature>
<feature type="modified residue" description="N6-methylated lysine; alternate" evidence="6">
    <location>
        <position position="118"/>
    </location>
</feature>
<feature type="modified residue" description="N6-succinyllysine; alternate" evidence="2">
    <location>
        <position position="118"/>
    </location>
</feature>
<feature type="modified residue" description="N6-lactoyllysine; alternate" evidence="16">
    <location>
        <position position="122"/>
    </location>
</feature>
<feature type="modified residue" description="N6-succinyllysine; alternate" evidence="2">
    <location>
        <position position="122"/>
    </location>
</feature>
<feature type="cross-link" description="Glycyl lysine isopeptide (Lys-Gly) (interchain with G-Cter in SUMO2); alternate" evidence="3">
    <location>
        <position position="7"/>
    </location>
</feature>
<feature type="cross-link" description="Glycyl lysine isopeptide (Lys-Gly) (interchain with G-Cter in SUMO2); alternate" evidence="7">
    <location>
        <position position="22"/>
    </location>
</feature>
<feature type="cross-link" description="Glycyl lysine isopeptide (Lys-Gly) (interchain with G-Cter in ubiquitin); alternate" evidence="2">
    <location>
        <position position="36"/>
    </location>
</feature>
<feature type="cross-link" description="Glycyl lysine isopeptide (Lys-Gly) (interchain with G-Cter in ubiquitin); alternate" evidence="12 13">
    <location>
        <position position="122"/>
    </location>
</feature>
<feature type="sequence conflict" description="In Ref. 6; AAH66243." evidence="18" ref="6">
    <original>P</original>
    <variation>A</variation>
    <location>
        <position position="2"/>
    </location>
</feature>
<feature type="sequence conflict" description="In Ref. 6; AAH66241." evidence="18" ref="6">
    <original>K</original>
    <variation>E</variation>
    <location>
        <position position="22"/>
    </location>
</feature>
<feature type="sequence conflict" description="In Ref. 6; AAH66240." evidence="18" ref="6">
    <original>S</original>
    <variation>P</variation>
    <location>
        <position position="80"/>
    </location>
</feature>
<feature type="helix" evidence="20">
    <location>
        <begin position="40"/>
        <end position="50"/>
    </location>
</feature>
<feature type="helix" evidence="20">
    <location>
        <begin position="58"/>
        <end position="85"/>
    </location>
</feature>
<feature type="strand" evidence="20">
    <location>
        <begin position="89"/>
        <end position="91"/>
    </location>
</feature>
<feature type="helix" evidence="20">
    <location>
        <begin position="93"/>
        <end position="103"/>
    </location>
</feature>
<feature type="helix" evidence="20">
    <location>
        <begin position="108"/>
        <end position="124"/>
    </location>
</feature>
<organism>
    <name type="scientific">Homo sapiens</name>
    <name type="common">Human</name>
    <dbReference type="NCBI Taxonomy" id="9606"/>
    <lineage>
        <taxon>Eukaryota</taxon>
        <taxon>Metazoa</taxon>
        <taxon>Chordata</taxon>
        <taxon>Craniata</taxon>
        <taxon>Vertebrata</taxon>
        <taxon>Euteleostomi</taxon>
        <taxon>Mammalia</taxon>
        <taxon>Eutheria</taxon>
        <taxon>Euarchontoglires</taxon>
        <taxon>Primates</taxon>
        <taxon>Haplorrhini</taxon>
        <taxon>Catarrhini</taxon>
        <taxon>Hominidae</taxon>
        <taxon>Homo</taxon>
    </lineage>
</organism>
<dbReference type="EMBL" id="AF397301">
    <property type="protein sequence ID" value="AAK84040.1"/>
    <property type="molecule type" value="Genomic_DNA"/>
</dbReference>
<dbReference type="EMBL" id="AF531284">
    <property type="protein sequence ID" value="AAN06684.1"/>
    <property type="molecule type" value="Genomic_DNA"/>
</dbReference>
<dbReference type="EMBL" id="AK312055">
    <property type="protein sequence ID" value="BAG34991.1"/>
    <property type="molecule type" value="mRNA"/>
</dbReference>
<dbReference type="EMBL" id="AL512384">
    <property type="status" value="NOT_ANNOTATED_CDS"/>
    <property type="molecule type" value="Genomic_DNA"/>
</dbReference>
<dbReference type="EMBL" id="CH471087">
    <property type="protein sequence ID" value="EAW55490.1"/>
    <property type="molecule type" value="Genomic_DNA"/>
</dbReference>
<dbReference type="EMBL" id="BC066238">
    <property type="protein sequence ID" value="AAH66238.1"/>
    <property type="molecule type" value="mRNA"/>
</dbReference>
<dbReference type="EMBL" id="BC066239">
    <property type="protein sequence ID" value="AAH66239.1"/>
    <property type="molecule type" value="mRNA"/>
</dbReference>
<dbReference type="EMBL" id="BC066240">
    <property type="protein sequence ID" value="AAH66240.1"/>
    <property type="molecule type" value="mRNA"/>
</dbReference>
<dbReference type="EMBL" id="BC066241">
    <property type="protein sequence ID" value="AAH66241.1"/>
    <property type="molecule type" value="mRNA"/>
</dbReference>
<dbReference type="EMBL" id="BC066242">
    <property type="protein sequence ID" value="AAH66242.1"/>
    <property type="molecule type" value="mRNA"/>
</dbReference>
<dbReference type="EMBL" id="BC066243">
    <property type="protein sequence ID" value="AAH66243.1"/>
    <property type="molecule type" value="mRNA"/>
</dbReference>
<dbReference type="CCDS" id="CCDS4563.1"/>
<dbReference type="RefSeq" id="NP_733759.1">
    <property type="nucleotide sequence ID" value="NM_170610.3"/>
</dbReference>
<dbReference type="PDB" id="3WKJ">
    <property type="method" value="X-ray"/>
    <property type="resolution" value="2.80 A"/>
    <property type="chains" value="D/H=1-127"/>
</dbReference>
<dbReference type="PDB" id="5GSU">
    <property type="method" value="X-ray"/>
    <property type="resolution" value="3.10 A"/>
    <property type="chains" value="D/H=2-127"/>
</dbReference>
<dbReference type="PDB" id="5GT3">
    <property type="method" value="X-ray"/>
    <property type="resolution" value="2.91 A"/>
    <property type="chains" value="D/H=2-127"/>
</dbReference>
<dbReference type="PDB" id="6BIY">
    <property type="method" value="X-ray"/>
    <property type="resolution" value="2.05 A"/>
    <property type="chains" value="C=70-82"/>
</dbReference>
<dbReference type="PDB" id="8VLR">
    <property type="method" value="EM"/>
    <property type="resolution" value="2.60 A"/>
    <property type="chains" value="D/H=34-126"/>
</dbReference>
<dbReference type="PDBsum" id="3WKJ"/>
<dbReference type="PDBsum" id="5GSU"/>
<dbReference type="PDBsum" id="5GT3"/>
<dbReference type="PDBsum" id="6BIY"/>
<dbReference type="PDBsum" id="8VLR"/>
<dbReference type="EMDB" id="EMD-43342"/>
<dbReference type="SMR" id="Q96A08"/>
<dbReference type="BioGRID" id="129111">
    <property type="interactions" value="188"/>
</dbReference>
<dbReference type="FunCoup" id="Q96A08">
    <property type="interactions" value="660"/>
</dbReference>
<dbReference type="IntAct" id="Q96A08">
    <property type="interactions" value="92"/>
</dbReference>
<dbReference type="MINT" id="Q96A08"/>
<dbReference type="STRING" id="9606.ENSP00000274764"/>
<dbReference type="GlyGen" id="Q96A08">
    <property type="glycosylation" value="1 site, 1 O-linked glycan (1 site)"/>
</dbReference>
<dbReference type="iPTMnet" id="Q96A08"/>
<dbReference type="MetOSite" id="Q96A08"/>
<dbReference type="PhosphoSitePlus" id="Q96A08"/>
<dbReference type="SwissPalm" id="Q96A08"/>
<dbReference type="BioMuta" id="HIST1H2BA"/>
<dbReference type="DMDM" id="51316070"/>
<dbReference type="jPOST" id="Q96A08"/>
<dbReference type="MassIVE" id="Q96A08"/>
<dbReference type="PaxDb" id="9606-ENSP00000274764"/>
<dbReference type="PeptideAtlas" id="Q96A08"/>
<dbReference type="ProteomicsDB" id="75889"/>
<dbReference type="Pumba" id="Q96A08"/>
<dbReference type="TopDownProteomics" id="Q96A08"/>
<dbReference type="ABCD" id="Q96A08">
    <property type="antibodies" value="4 sequenced antibodies"/>
</dbReference>
<dbReference type="Antibodypedia" id="3172">
    <property type="antibodies" value="305 antibodies from 21 providers"/>
</dbReference>
<dbReference type="DNASU" id="255626"/>
<dbReference type="Ensembl" id="ENST00000274764.5">
    <property type="protein sequence ID" value="ENSP00000274764.3"/>
    <property type="gene ID" value="ENSG00000146047.7"/>
</dbReference>
<dbReference type="GeneID" id="255626"/>
<dbReference type="KEGG" id="hsa:255626"/>
<dbReference type="MANE-Select" id="ENST00000274764.5">
    <property type="protein sequence ID" value="ENSP00000274764.3"/>
    <property type="RefSeq nucleotide sequence ID" value="NM_170610.3"/>
    <property type="RefSeq protein sequence ID" value="NP_733759.1"/>
</dbReference>
<dbReference type="UCSC" id="uc003nfd.4">
    <property type="organism name" value="human"/>
</dbReference>
<dbReference type="AGR" id="HGNC:18730"/>
<dbReference type="CTD" id="255626"/>
<dbReference type="GeneCards" id="H2BC1"/>
<dbReference type="HGNC" id="HGNC:18730">
    <property type="gene designation" value="H2BC1"/>
</dbReference>
<dbReference type="HPA" id="ENSG00000146047">
    <property type="expression patterns" value="Tissue enriched (testis)"/>
</dbReference>
<dbReference type="MIM" id="609904">
    <property type="type" value="gene"/>
</dbReference>
<dbReference type="neXtProt" id="NX_Q96A08"/>
<dbReference type="OpenTargets" id="ENSG00000146047"/>
<dbReference type="VEuPathDB" id="HostDB:ENSG00000146047"/>
<dbReference type="eggNOG" id="KOG1744">
    <property type="taxonomic scope" value="Eukaryota"/>
</dbReference>
<dbReference type="GeneTree" id="ENSGT01110000267181"/>
<dbReference type="HOGENOM" id="CLU_075666_2_1_1"/>
<dbReference type="InParanoid" id="Q96A08"/>
<dbReference type="OMA" id="CHKIVKT"/>
<dbReference type="OrthoDB" id="9832711at2759"/>
<dbReference type="PAN-GO" id="Q96A08">
    <property type="GO annotations" value="2 GO annotations based on evolutionary models"/>
</dbReference>
<dbReference type="PhylomeDB" id="Q96A08"/>
<dbReference type="TreeFam" id="TF300212"/>
<dbReference type="PathwayCommons" id="Q96A08"/>
<dbReference type="Reactome" id="R-HSA-110328">
    <property type="pathway name" value="Recognition and association of DNA glycosylase with site containing an affected pyrimidine"/>
</dbReference>
<dbReference type="Reactome" id="R-HSA-110329">
    <property type="pathway name" value="Cleavage of the damaged pyrimidine"/>
</dbReference>
<dbReference type="Reactome" id="R-HSA-110330">
    <property type="pathway name" value="Recognition and association of DNA glycosylase with site containing an affected purine"/>
</dbReference>
<dbReference type="Reactome" id="R-HSA-110331">
    <property type="pathway name" value="Cleavage of the damaged purine"/>
</dbReference>
<dbReference type="Reactome" id="R-HSA-1221632">
    <property type="pathway name" value="Meiotic synapsis"/>
</dbReference>
<dbReference type="Reactome" id="R-HSA-171306">
    <property type="pathway name" value="Packaging Of Telomere Ends"/>
</dbReference>
<dbReference type="Reactome" id="R-HSA-1912408">
    <property type="pathway name" value="Pre-NOTCH Transcription and Translation"/>
</dbReference>
<dbReference type="Reactome" id="R-HSA-201722">
    <property type="pathway name" value="Formation of the beta-catenin:TCF transactivating complex"/>
</dbReference>
<dbReference type="Reactome" id="R-HSA-212300">
    <property type="pathway name" value="PRC2 methylates histones and DNA"/>
</dbReference>
<dbReference type="Reactome" id="R-HSA-2299718">
    <property type="pathway name" value="Condensation of Prophase Chromosomes"/>
</dbReference>
<dbReference type="Reactome" id="R-HSA-2559580">
    <property type="pathway name" value="Oxidative Stress Induced Senescence"/>
</dbReference>
<dbReference type="Reactome" id="R-HSA-2559582">
    <property type="pathway name" value="Senescence-Associated Secretory Phenotype (SASP)"/>
</dbReference>
<dbReference type="Reactome" id="R-HSA-2559586">
    <property type="pathway name" value="DNA Damage/Telomere Stress Induced Senescence"/>
</dbReference>
<dbReference type="Reactome" id="R-HSA-3214815">
    <property type="pathway name" value="HDACs deacetylate histones"/>
</dbReference>
<dbReference type="Reactome" id="R-HSA-3214847">
    <property type="pathway name" value="HATs acetylate histones"/>
</dbReference>
<dbReference type="Reactome" id="R-HSA-427359">
    <property type="pathway name" value="SIRT1 negatively regulates rRNA expression"/>
</dbReference>
<dbReference type="Reactome" id="R-HSA-427389">
    <property type="pathway name" value="ERCC6 (CSB) and EHMT2 (G9a) positively regulate rRNA expression"/>
</dbReference>
<dbReference type="Reactome" id="R-HSA-427413">
    <property type="pathway name" value="NoRC negatively regulates rRNA expression"/>
</dbReference>
<dbReference type="Reactome" id="R-HSA-5250924">
    <property type="pathway name" value="B-WICH complex positively regulates rRNA expression"/>
</dbReference>
<dbReference type="Reactome" id="R-HSA-5334118">
    <property type="pathway name" value="DNA methylation"/>
</dbReference>
<dbReference type="Reactome" id="R-HSA-5578749">
    <property type="pathway name" value="Transcriptional regulation by small RNAs"/>
</dbReference>
<dbReference type="Reactome" id="R-HSA-5617472">
    <property type="pathway name" value="Activation of anterior HOX genes in hindbrain development during early embryogenesis"/>
</dbReference>
<dbReference type="Reactome" id="R-HSA-5625886">
    <property type="pathway name" value="Activated PKN1 stimulates transcription of AR (androgen receptor) regulated genes KLK2 and KLK3"/>
</dbReference>
<dbReference type="Reactome" id="R-HSA-5689880">
    <property type="pathway name" value="Ub-specific processing proteases"/>
</dbReference>
<dbReference type="Reactome" id="R-HSA-5693565">
    <property type="pathway name" value="Recruitment and ATM-mediated phosphorylation of repair and signaling proteins at DNA double strand breaks"/>
</dbReference>
<dbReference type="Reactome" id="R-HSA-5693571">
    <property type="pathway name" value="Nonhomologous End-Joining (NHEJ)"/>
</dbReference>
<dbReference type="Reactome" id="R-HSA-5693607">
    <property type="pathway name" value="Processing of DNA double-strand break ends"/>
</dbReference>
<dbReference type="Reactome" id="R-HSA-606279">
    <property type="pathway name" value="Deposition of new CENPA-containing nucleosomes at the centromere"/>
</dbReference>
<dbReference type="Reactome" id="R-HSA-68616">
    <property type="pathway name" value="Assembly of the ORC complex at the origin of replication"/>
</dbReference>
<dbReference type="Reactome" id="R-HSA-69473">
    <property type="pathway name" value="G2/M DNA damage checkpoint"/>
</dbReference>
<dbReference type="Reactome" id="R-HSA-73728">
    <property type="pathway name" value="RNA Polymerase I Promoter Opening"/>
</dbReference>
<dbReference type="Reactome" id="R-HSA-73772">
    <property type="pathway name" value="RNA Polymerase I Promoter Escape"/>
</dbReference>
<dbReference type="Reactome" id="R-HSA-8866654">
    <property type="pathway name" value="E3 ubiquitin ligases ubiquitinate target proteins"/>
</dbReference>
<dbReference type="Reactome" id="R-HSA-8936459">
    <property type="pathway name" value="RUNX1 regulates genes involved in megakaryocyte differentiation and platelet function"/>
</dbReference>
<dbReference type="Reactome" id="R-HSA-8939236">
    <property type="pathway name" value="RUNX1 regulates transcription of genes involved in differentiation of HSCs"/>
</dbReference>
<dbReference type="Reactome" id="R-HSA-9018519">
    <property type="pathway name" value="Estrogen-dependent gene expression"/>
</dbReference>
<dbReference type="Reactome" id="R-HSA-912446">
    <property type="pathway name" value="Meiotic recombination"/>
</dbReference>
<dbReference type="Reactome" id="R-HSA-9609690">
    <property type="pathway name" value="HCMV Early Events"/>
</dbReference>
<dbReference type="Reactome" id="R-HSA-9610379">
    <property type="pathway name" value="HCMV Late Events"/>
</dbReference>
<dbReference type="Reactome" id="R-HSA-9616222">
    <property type="pathway name" value="Transcriptional regulation of granulopoiesis"/>
</dbReference>
<dbReference type="Reactome" id="R-HSA-9670095">
    <property type="pathway name" value="Inhibition of DNA recombination at telomere"/>
</dbReference>
<dbReference type="Reactome" id="R-HSA-9710421">
    <property type="pathway name" value="Defective pyroptosis"/>
</dbReference>
<dbReference type="Reactome" id="R-HSA-977225">
    <property type="pathway name" value="Amyloid fiber formation"/>
</dbReference>
<dbReference type="Reactome" id="R-HSA-9821002">
    <property type="pathway name" value="Chromatin modifications during the maternal to zygotic transition (MZT)"/>
</dbReference>
<dbReference type="Reactome" id="R-HSA-9821993">
    <property type="pathway name" value="Replacement of protamines by nucleosomes in the male pronucleus"/>
</dbReference>
<dbReference type="Reactome" id="R-HSA-9841922">
    <property type="pathway name" value="MLL4 and MLL3 complexes regulate expression of PPARG target genes in adipogenesis and hepatic steatosis"/>
</dbReference>
<dbReference type="Reactome" id="R-HSA-9843940">
    <property type="pathway name" value="Regulation of endogenous retroelements by KRAB-ZFP proteins"/>
</dbReference>
<dbReference type="Reactome" id="R-HSA-9843970">
    <property type="pathway name" value="Regulation of endogenous retroelements by the Human Silencing Hub (HUSH) complex"/>
</dbReference>
<dbReference type="Reactome" id="R-HSA-9845323">
    <property type="pathway name" value="Regulation of endogenous retroelements by Piwi-interacting RNAs (piRNAs)"/>
</dbReference>
<dbReference type="SignaLink" id="Q96A08"/>
<dbReference type="SIGNOR" id="Q96A08"/>
<dbReference type="BioGRID-ORCS" id="255626">
    <property type="hits" value="12 hits in 1131 CRISPR screens"/>
</dbReference>
<dbReference type="EvolutionaryTrace" id="Q96A08"/>
<dbReference type="GeneWiki" id="HIST1H2BA"/>
<dbReference type="GenomeRNAi" id="255626"/>
<dbReference type="Pharos" id="Q96A08">
    <property type="development level" value="Tbio"/>
</dbReference>
<dbReference type="PRO" id="PR:Q96A08"/>
<dbReference type="Proteomes" id="UP000005640">
    <property type="component" value="Chromosome 6"/>
</dbReference>
<dbReference type="RNAct" id="Q96A08">
    <property type="molecule type" value="protein"/>
</dbReference>
<dbReference type="Bgee" id="ENSG00000146047">
    <property type="expression patterns" value="Expressed in primordial germ cell in gonad and 21 other cell types or tissues"/>
</dbReference>
<dbReference type="GO" id="GO:0009986">
    <property type="term" value="C:cell surface"/>
    <property type="evidence" value="ECO:0007669"/>
    <property type="project" value="Ensembl"/>
</dbReference>
<dbReference type="GO" id="GO:0000781">
    <property type="term" value="C:chromosome, telomeric region"/>
    <property type="evidence" value="ECO:0007005"/>
    <property type="project" value="BHF-UCL"/>
</dbReference>
<dbReference type="GO" id="GO:0001674">
    <property type="term" value="C:female germ cell nucleus"/>
    <property type="evidence" value="ECO:0007669"/>
    <property type="project" value="Ensembl"/>
</dbReference>
<dbReference type="GO" id="GO:0005654">
    <property type="term" value="C:nucleoplasm"/>
    <property type="evidence" value="ECO:0000304"/>
    <property type="project" value="Reactome"/>
</dbReference>
<dbReference type="GO" id="GO:0000786">
    <property type="term" value="C:nucleosome"/>
    <property type="evidence" value="ECO:0000314"/>
    <property type="project" value="UniProtKB"/>
</dbReference>
<dbReference type="GO" id="GO:0005634">
    <property type="term" value="C:nucleus"/>
    <property type="evidence" value="ECO:0007005"/>
    <property type="project" value="UniProtKB"/>
</dbReference>
<dbReference type="GO" id="GO:0003677">
    <property type="term" value="F:DNA binding"/>
    <property type="evidence" value="ECO:0007669"/>
    <property type="project" value="UniProtKB-KW"/>
</dbReference>
<dbReference type="GO" id="GO:0042393">
    <property type="term" value="F:histone binding"/>
    <property type="evidence" value="ECO:0007669"/>
    <property type="project" value="Ensembl"/>
</dbReference>
<dbReference type="GO" id="GO:0046982">
    <property type="term" value="F:protein heterodimerization activity"/>
    <property type="evidence" value="ECO:0007669"/>
    <property type="project" value="InterPro"/>
</dbReference>
<dbReference type="GO" id="GO:0030527">
    <property type="term" value="F:structural constituent of chromatin"/>
    <property type="evidence" value="ECO:0007669"/>
    <property type="project" value="InterPro"/>
</dbReference>
<dbReference type="GO" id="GO:0051276">
    <property type="term" value="P:chromosome organization"/>
    <property type="evidence" value="ECO:0007669"/>
    <property type="project" value="Ensembl"/>
</dbReference>
<dbReference type="GO" id="GO:0006954">
    <property type="term" value="P:inflammatory response"/>
    <property type="evidence" value="ECO:0007669"/>
    <property type="project" value="Ensembl"/>
</dbReference>
<dbReference type="GO" id="GO:0071674">
    <property type="term" value="P:mononuclear cell migration"/>
    <property type="evidence" value="ECO:0007669"/>
    <property type="project" value="Ensembl"/>
</dbReference>
<dbReference type="GO" id="GO:0006334">
    <property type="term" value="P:nucleosome assembly"/>
    <property type="evidence" value="ECO:0000314"/>
    <property type="project" value="UniProtKB"/>
</dbReference>
<dbReference type="GO" id="GO:0006337">
    <property type="term" value="P:nucleosome disassembly"/>
    <property type="evidence" value="ECO:0000250"/>
    <property type="project" value="UniProtKB"/>
</dbReference>
<dbReference type="GO" id="GO:0031639">
    <property type="term" value="P:plasminogen activation"/>
    <property type="evidence" value="ECO:0007669"/>
    <property type="project" value="Ensembl"/>
</dbReference>
<dbReference type="GO" id="GO:0035092">
    <property type="term" value="P:sperm DNA condensation"/>
    <property type="evidence" value="ECO:0000250"/>
    <property type="project" value="UniProtKB"/>
</dbReference>
<dbReference type="CDD" id="cd22910">
    <property type="entry name" value="HFD_H2B"/>
    <property type="match status" value="1"/>
</dbReference>
<dbReference type="FunFam" id="1.10.20.10:FF:000003">
    <property type="entry name" value="Histone H2B"/>
    <property type="match status" value="1"/>
</dbReference>
<dbReference type="Gene3D" id="1.10.20.10">
    <property type="entry name" value="Histone, subunit A"/>
    <property type="match status" value="1"/>
</dbReference>
<dbReference type="InterPro" id="IPR009072">
    <property type="entry name" value="Histone-fold"/>
</dbReference>
<dbReference type="InterPro" id="IPR007125">
    <property type="entry name" value="Histone_H2A/H2B/H3"/>
</dbReference>
<dbReference type="InterPro" id="IPR000558">
    <property type="entry name" value="Histone_H2B"/>
</dbReference>
<dbReference type="InterPro" id="IPR055333">
    <property type="entry name" value="HISTONE_H2B_site"/>
</dbReference>
<dbReference type="PANTHER" id="PTHR23428">
    <property type="entry name" value="HISTONE H2B"/>
    <property type="match status" value="1"/>
</dbReference>
<dbReference type="Pfam" id="PF00125">
    <property type="entry name" value="Histone"/>
    <property type="match status" value="1"/>
</dbReference>
<dbReference type="PRINTS" id="PR00621">
    <property type="entry name" value="HISTONEH2B"/>
</dbReference>
<dbReference type="SMART" id="SM00427">
    <property type="entry name" value="H2B"/>
    <property type="match status" value="1"/>
</dbReference>
<dbReference type="SUPFAM" id="SSF47113">
    <property type="entry name" value="Histone-fold"/>
    <property type="match status" value="1"/>
</dbReference>
<dbReference type="PROSITE" id="PS00357">
    <property type="entry name" value="HISTONE_H2B"/>
    <property type="match status" value="1"/>
</dbReference>
<evidence type="ECO:0000250" key="1">
    <source>
        <dbReference type="UniProtKB" id="P23527"/>
    </source>
</evidence>
<evidence type="ECO:0000250" key="2">
    <source>
        <dbReference type="UniProtKB" id="P33778"/>
    </source>
</evidence>
<evidence type="ECO:0000250" key="3">
    <source>
        <dbReference type="UniProtKB" id="P58876"/>
    </source>
</evidence>
<evidence type="ECO:0000250" key="4">
    <source>
        <dbReference type="UniProtKB" id="P62807"/>
    </source>
</evidence>
<evidence type="ECO:0000250" key="5">
    <source>
        <dbReference type="UniProtKB" id="P70696"/>
    </source>
</evidence>
<evidence type="ECO:0000250" key="6">
    <source>
        <dbReference type="UniProtKB" id="Q00729"/>
    </source>
</evidence>
<evidence type="ECO:0000250" key="7">
    <source>
        <dbReference type="UniProtKB" id="Q5QNW6"/>
    </source>
</evidence>
<evidence type="ECO:0000250" key="8">
    <source>
        <dbReference type="UniProtKB" id="Q64475"/>
    </source>
</evidence>
<evidence type="ECO:0000256" key="9">
    <source>
        <dbReference type="SAM" id="MobiDB-lite"/>
    </source>
</evidence>
<evidence type="ECO:0000269" key="10">
    <source>
    </source>
</evidence>
<evidence type="ECO:0000269" key="11">
    <source>
    </source>
</evidence>
<evidence type="ECO:0000269" key="12">
    <source>
    </source>
</evidence>
<evidence type="ECO:0000269" key="13">
    <source>
    </source>
</evidence>
<evidence type="ECO:0000269" key="14">
    <source>
    </source>
</evidence>
<evidence type="ECO:0000269" key="15">
    <source>
    </source>
</evidence>
<evidence type="ECO:0000269" key="16">
    <source>
    </source>
</evidence>
<evidence type="ECO:0000303" key="17">
    <source>
    </source>
</evidence>
<evidence type="ECO:0000305" key="18"/>
<evidence type="ECO:0000312" key="19">
    <source>
        <dbReference type="HGNC" id="HGNC:18730"/>
    </source>
</evidence>
<evidence type="ECO:0007829" key="20">
    <source>
        <dbReference type="PDB" id="3WKJ"/>
    </source>
</evidence>
<proteinExistence type="evidence at protein level"/>
<comment type="function">
    <text evidence="5 14">Variant histone specifically required to direct the transformation of dissociating nucleosomes to protamine in male germ cells (By similarity). Entirely replaces classical histone H2B prior nucleosome to protamine transition and probably acts as a nucleosome dissociating factor that creates a more dynamic chromatin, facilitating the large-scale exchange of histones (By similarity). Core component of nucleosome (By similarity). Nucleosomes wrap and compact DNA into chromatin, limiting DNA accessibility to the cellular machineries which require DNA as a template (By similarity). Histones thereby play a central role in transcription regulation, DNA repair, DNA replication and chromosomal stability (By similarity). DNA accessibility is regulated via a complex set of post-translational modifications of histones, also called histone code, and nucleosome remodeling (By similarity). Also found in fat cells, its function and the presence of post-translational modifications specific to such cells are still unclear (PubMed:21249133).</text>
</comment>
<comment type="subunit">
    <text evidence="5">The nucleosome is a histone octamer containing two molecules each of H2A, H2B, H3 and H4 assembled in one H3-H4 heterotetramer and two H2A-H2B heterodimers.</text>
</comment>
<comment type="subcellular location">
    <subcellularLocation>
        <location evidence="5">Nucleus</location>
    </subcellularLocation>
    <subcellularLocation>
        <location evidence="5">Chromosome</location>
    </subcellularLocation>
</comment>
<comment type="tissue specificity">
    <text evidence="10 14">Mainly expressed in testis, and the corresponding protein is also present in mature sperm (at protein level). Also found in some fat cells.</text>
</comment>
<comment type="PTM">
    <text evidence="12 13">Monoubiquitination at Lys-36 (H2BK34Ub) by the MSL1/MSL2 dimer is required for histone H3 'Lys-4' (H3K4me) and 'Lys-79' (H3K79me) methylation and transcription activation at specific gene loci, such as HOXA9 and MEIS1 loci. Similarly, monoubiquitination at Lys-122 (H2BK120Ub) by the RNF20/40 complex gives a specific tag for epigenetic transcriptional activation and is also prerequisite for histone H3 'Lys-4' and 'Lys-79' methylation. It also functions cooperatively with the FACT dimer to stimulate elongation by RNA polymerase II. H2BK120Ub also acts as a regulator of mRNA splicing: deubiquitination by USP49 is required for efficient cotranscriptional splicing of a large set of exons.</text>
</comment>
<comment type="PTM">
    <text evidence="15">Crotonylation (Kcr) is specifically present in male germ cells and marks testis-specific genes in post-meiotic cells, including X-linked genes that escape sex chromosome inactivation in haploid cells. Crotonylation marks active promoters and enhancers and confers resistance to transcriptional repressors. It is also associated with post-meiotically activated genes on autosomes.</text>
</comment>
<comment type="PTM">
    <text evidence="6">Acetylated during spermatogenesis. Acetylated form is most abundant in spermatogonia compared to spermatocytes and round spermatids (By similarity).</text>
</comment>
<comment type="PTM">
    <text evidence="6">Phosphorylated at Thr-117 in spermatogonia, spermatocytes and round spermatids.</text>
</comment>
<comment type="PTM">
    <text evidence="6">Methylated at Lys-118 in spermatogonia, spermatocytes and round spermatids.</text>
</comment>
<comment type="PTM">
    <text evidence="16">Lactylated in macrophages by EP300/P300 by using lactoyl-CoA directly derived from endogenous or exogenous lactate, leading to stimulates gene transcription.</text>
</comment>
<comment type="similarity">
    <text evidence="18">Belongs to the histone H2B family.</text>
</comment>
<sequence length="127" mass="14167">MPEVSSKGATISKKGFKKAVVKTQKKEGKKRKRTRKESYSIYIYKVLKQVHPDTGISSKAMSIMNSFVTDIFERIASEASRLAHYSKRSTISSREIQTAVRLLLPGELAKHAVSEGTKAVTKYTSSK</sequence>